<comment type="catalytic activity">
    <reaction>
        <text>DNA(n) + a 2'-deoxyribonucleoside 5'-triphosphate = DNA(n+1) + diphosphate</text>
        <dbReference type="Rhea" id="RHEA:22508"/>
        <dbReference type="Rhea" id="RHEA-COMP:17339"/>
        <dbReference type="Rhea" id="RHEA-COMP:17340"/>
        <dbReference type="ChEBI" id="CHEBI:33019"/>
        <dbReference type="ChEBI" id="CHEBI:61560"/>
        <dbReference type="ChEBI" id="CHEBI:173112"/>
        <dbReference type="EC" id="2.7.7.49"/>
    </reaction>
</comment>
<keyword id="KW-0064">Aspartyl protease</keyword>
<keyword id="KW-0255">Endonuclease</keyword>
<keyword id="KW-0378">Hydrolase</keyword>
<keyword id="KW-0479">Metal-binding</keyword>
<keyword id="KW-0540">Nuclease</keyword>
<keyword id="KW-0548">Nucleotidyltransferase</keyword>
<keyword id="KW-0645">Protease</keyword>
<keyword id="KW-1185">Reference proteome</keyword>
<keyword id="KW-0695">RNA-directed DNA polymerase</keyword>
<keyword id="KW-0808">Transferase</keyword>
<keyword id="KW-0814">Transposable element</keyword>
<keyword id="KW-0862">Zinc</keyword>
<keyword id="KW-0863">Zinc-finger</keyword>
<evidence type="ECO:0000250" key="1"/>
<evidence type="ECO:0000255" key="2">
    <source>
        <dbReference type="PROSITE-ProRule" id="PRU00047"/>
    </source>
</evidence>
<evidence type="ECO:0000255" key="3">
    <source>
        <dbReference type="PROSITE-ProRule" id="PRU00457"/>
    </source>
</evidence>
<evidence type="ECO:0000256" key="4">
    <source>
        <dbReference type="SAM" id="MobiDB-lite"/>
    </source>
</evidence>
<accession>P10978</accession>
<feature type="chain" id="PRO_0000199561" description="Retrovirus-related Pol polyprotein from transposon TNT 1-94">
    <location>
        <begin position="1"/>
        <end position="1328"/>
    </location>
</feature>
<feature type="domain" description="Integrase catalytic" evidence="3">
    <location>
        <begin position="473"/>
        <end position="642"/>
    </location>
</feature>
<feature type="zinc finger region" description="CCHC-type" evidence="2">
    <location>
        <begin position="230"/>
        <end position="247"/>
    </location>
</feature>
<feature type="region of interest" description="Disordered" evidence="4">
    <location>
        <begin position="189"/>
        <end position="265"/>
    </location>
</feature>
<feature type="region of interest" description="Disordered" evidence="4">
    <location>
        <begin position="729"/>
        <end position="800"/>
    </location>
</feature>
<feature type="compositionally biased region" description="Basic residues" evidence="4">
    <location>
        <begin position="217"/>
        <end position="229"/>
    </location>
</feature>
<feature type="compositionally biased region" description="Basic and acidic residues" evidence="4">
    <location>
        <begin position="241"/>
        <end position="253"/>
    </location>
</feature>
<feature type="compositionally biased region" description="Polar residues" evidence="4">
    <location>
        <begin position="729"/>
        <end position="742"/>
    </location>
</feature>
<feature type="compositionally biased region" description="Basic and acidic residues" evidence="4">
    <location>
        <begin position="770"/>
        <end position="798"/>
    </location>
</feature>
<feature type="active site" description="For protease activity" evidence="1">
    <location>
        <position position="297"/>
    </location>
</feature>
<dbReference type="EC" id="3.4.23.-"/>
<dbReference type="EC" id="2.7.7.49"/>
<dbReference type="EMBL" id="X13777">
    <property type="protein sequence ID" value="CAA32025.1"/>
    <property type="molecule type" value="Genomic_DNA"/>
</dbReference>
<dbReference type="PIR" id="S04273">
    <property type="entry name" value="S04273"/>
</dbReference>
<dbReference type="MEROPS" id="A11.002"/>
<dbReference type="PaxDb" id="4097-P10978"/>
<dbReference type="OrthoDB" id="8027607at2759"/>
<dbReference type="Proteomes" id="UP000084051">
    <property type="component" value="Unplaced"/>
</dbReference>
<dbReference type="GO" id="GO:0004190">
    <property type="term" value="F:aspartic-type endopeptidase activity"/>
    <property type="evidence" value="ECO:0007669"/>
    <property type="project" value="UniProtKB-KW"/>
</dbReference>
<dbReference type="GO" id="GO:0004519">
    <property type="term" value="F:endonuclease activity"/>
    <property type="evidence" value="ECO:0007669"/>
    <property type="project" value="UniProtKB-KW"/>
</dbReference>
<dbReference type="GO" id="GO:0003676">
    <property type="term" value="F:nucleic acid binding"/>
    <property type="evidence" value="ECO:0007669"/>
    <property type="project" value="InterPro"/>
</dbReference>
<dbReference type="GO" id="GO:0003964">
    <property type="term" value="F:RNA-directed DNA polymerase activity"/>
    <property type="evidence" value="ECO:0007669"/>
    <property type="project" value="UniProtKB-KW"/>
</dbReference>
<dbReference type="GO" id="GO:0008270">
    <property type="term" value="F:zinc ion binding"/>
    <property type="evidence" value="ECO:0007669"/>
    <property type="project" value="UniProtKB-KW"/>
</dbReference>
<dbReference type="GO" id="GO:0015074">
    <property type="term" value="P:DNA integration"/>
    <property type="evidence" value="ECO:0007669"/>
    <property type="project" value="InterPro"/>
</dbReference>
<dbReference type="GO" id="GO:0006508">
    <property type="term" value="P:proteolysis"/>
    <property type="evidence" value="ECO:0007669"/>
    <property type="project" value="UniProtKB-KW"/>
</dbReference>
<dbReference type="CDD" id="cd09272">
    <property type="entry name" value="RNase_HI_RT_Ty1"/>
    <property type="match status" value="1"/>
</dbReference>
<dbReference type="Gene3D" id="3.30.420.10">
    <property type="entry name" value="Ribonuclease H-like superfamily/Ribonuclease H"/>
    <property type="match status" value="1"/>
</dbReference>
<dbReference type="Gene3D" id="4.10.60.10">
    <property type="entry name" value="Zinc finger, CCHC-type"/>
    <property type="match status" value="1"/>
</dbReference>
<dbReference type="InterPro" id="IPR043502">
    <property type="entry name" value="DNA/RNA_pol_sf"/>
</dbReference>
<dbReference type="InterPro" id="IPR025724">
    <property type="entry name" value="GAG-pre-integrase_dom"/>
</dbReference>
<dbReference type="InterPro" id="IPR001584">
    <property type="entry name" value="Integrase_cat-core"/>
</dbReference>
<dbReference type="InterPro" id="IPR054722">
    <property type="entry name" value="PolX-like_BBD"/>
</dbReference>
<dbReference type="InterPro" id="IPR039537">
    <property type="entry name" value="Retrotran_Ty1/copia-like"/>
</dbReference>
<dbReference type="InterPro" id="IPR012337">
    <property type="entry name" value="RNaseH-like_sf"/>
</dbReference>
<dbReference type="InterPro" id="IPR036397">
    <property type="entry name" value="RNaseH_sf"/>
</dbReference>
<dbReference type="InterPro" id="IPR013103">
    <property type="entry name" value="RVT_2"/>
</dbReference>
<dbReference type="InterPro" id="IPR001878">
    <property type="entry name" value="Znf_CCHC"/>
</dbReference>
<dbReference type="InterPro" id="IPR036875">
    <property type="entry name" value="Znf_CCHC_sf"/>
</dbReference>
<dbReference type="PANTHER" id="PTHR42648">
    <property type="entry name" value="TRANSPOSASE, PUTATIVE-RELATED"/>
    <property type="match status" value="1"/>
</dbReference>
<dbReference type="PANTHER" id="PTHR42648:SF28">
    <property type="entry name" value="TRANSPOSON-ENCODED PROTEIN WITH RIBONUCLEASE H-LIKE AND RETROVIRUS ZINC FINGER-LIKE DOMAINS"/>
    <property type="match status" value="1"/>
</dbReference>
<dbReference type="Pfam" id="PF13976">
    <property type="entry name" value="gag_pre-integrs"/>
    <property type="match status" value="1"/>
</dbReference>
<dbReference type="Pfam" id="PF22936">
    <property type="entry name" value="Pol_BBD"/>
    <property type="match status" value="1"/>
</dbReference>
<dbReference type="Pfam" id="PF14223">
    <property type="entry name" value="Retrotran_gag_2"/>
    <property type="match status" value="1"/>
</dbReference>
<dbReference type="Pfam" id="PF00665">
    <property type="entry name" value="rve"/>
    <property type="match status" value="1"/>
</dbReference>
<dbReference type="Pfam" id="PF07727">
    <property type="entry name" value="RVT_2"/>
    <property type="match status" value="1"/>
</dbReference>
<dbReference type="Pfam" id="PF00098">
    <property type="entry name" value="zf-CCHC"/>
    <property type="match status" value="1"/>
</dbReference>
<dbReference type="SMART" id="SM00343">
    <property type="entry name" value="ZnF_C2HC"/>
    <property type="match status" value="1"/>
</dbReference>
<dbReference type="SUPFAM" id="SSF56672">
    <property type="entry name" value="DNA/RNA polymerases"/>
    <property type="match status" value="1"/>
</dbReference>
<dbReference type="SUPFAM" id="SSF57756">
    <property type="entry name" value="Retrovirus zinc finger-like domains"/>
    <property type="match status" value="1"/>
</dbReference>
<dbReference type="SUPFAM" id="SSF53098">
    <property type="entry name" value="Ribonuclease H-like"/>
    <property type="match status" value="1"/>
</dbReference>
<dbReference type="PROSITE" id="PS50994">
    <property type="entry name" value="INTEGRASE"/>
    <property type="match status" value="1"/>
</dbReference>
<dbReference type="PROSITE" id="PS50158">
    <property type="entry name" value="ZF_CCHC"/>
    <property type="match status" value="1"/>
</dbReference>
<name>POLX_TOBAC</name>
<organism>
    <name type="scientific">Nicotiana tabacum</name>
    <name type="common">Common tobacco</name>
    <dbReference type="NCBI Taxonomy" id="4097"/>
    <lineage>
        <taxon>Eukaryota</taxon>
        <taxon>Viridiplantae</taxon>
        <taxon>Streptophyta</taxon>
        <taxon>Embryophyta</taxon>
        <taxon>Tracheophyta</taxon>
        <taxon>Spermatophyta</taxon>
        <taxon>Magnoliopsida</taxon>
        <taxon>eudicotyledons</taxon>
        <taxon>Gunneridae</taxon>
        <taxon>Pentapetalae</taxon>
        <taxon>asterids</taxon>
        <taxon>lamiids</taxon>
        <taxon>Solanales</taxon>
        <taxon>Solanaceae</taxon>
        <taxon>Nicotianoideae</taxon>
        <taxon>Nicotianeae</taxon>
        <taxon>Nicotiana</taxon>
    </lineage>
</organism>
<protein>
    <recommendedName>
        <fullName>Retrovirus-related Pol polyprotein from transposon TNT 1-94</fullName>
    </recommendedName>
    <domain>
        <recommendedName>
            <fullName>Protease</fullName>
            <ecNumber>3.4.23.-</ecNumber>
        </recommendedName>
    </domain>
    <domain>
        <recommendedName>
            <fullName>Reverse transcriptase</fullName>
            <ecNumber>2.7.7.49</ecNumber>
        </recommendedName>
    </domain>
    <domain>
        <recommendedName>
            <fullName>Endonuclease</fullName>
        </recommendedName>
    </domain>
</protein>
<proteinExistence type="evidence at transcript level"/>
<sequence>MSGVKYEVAKFNGDNGFSTWQRRMRDLLIQQGLHKVLDVDSKKPDTMKAEDWADLDERAASAIRLHLSDDVVNNIIDEDTARGIWTRLESLYMSKTLTNKLYLKKQLYALHMSEGTNFLSHLNVFNGLITQLANLGVKIEEEDKAILLLNSLPSSYDNLATTILHGKTTIELKDVTSALLLNEKMRKKPENQGQALITEGRGRSYQRSSNNYGRSGARGKSKNRSKSRVRNCYNCNQPGHFKRDCPNPRKGKGETSGQKNDDNTAAMVQNNDNVVLFINEEEECMHLSGPESEWVVDTAASHHATPVRDLFCRYVAGDFGTVKMGNTSYSKIAGIGDICIKTNVGCTLVLKDVRHVPDLRMNLISGIALDRDGYESYFANQKWRLTKGSLVIAKGVARGTLYRTNAEICQGELNAAQDEISVDLWHKRMGHMSEKGLQILAKKSLISYAKGTTVKPCDYCLFGKQHRVSFQTSSERKLNILDLVYSDVCGPMEIESMGGNKYFVTFIDDASRKLWVYILKTKDQVFQVFQKFHALVERETGRKLKRLRSDNGGEYTSREFEEYCSSHGIRHEKTVPGTPQHNGVAERMNRTIVEKVRSMLRMAKLPKSFWGEAVQTACYLINRSPSVPLAFEIPERVWTNKEVSYSHLKVFGCRAFAHVPKEQRTKLDDKSIPCIFIGYGDEEFGYRLWDPVKKKVIRSRDVVFRESEVRTAADMSEKVKNGIIPNFVTIPSTSNNPTSAESTTDEVSEQGEQPGEVIEQGEQLDEGVEEVEHPTQGEEQHQPLRRSERPRVESRRYPSTEYVLISDDREPESLKEVLSHPEKNQLMKAMQEEMESLQKNGTYKLVELPKGKRPLKCKWVFKLKKDGDCKLVRYKARLVVKGFEQKKGIDFDEIFSPVVKMTSIRTILSLAASLDLEVEQLDVKTAFLHGDLEEEIYMEQPEGFEVAGKKHMVCKLNKSLYGLKQAPRQWYMKFDSFMKSQTYLKTYSDPCVYFKRFSENNFIILLLYVDDMLIVGKDKGLIAKLKGDLSKSFDMKDLGPAQQILGMKIVRERTSRKLWLSQEKYIERVLERFNMKNAKPVSTPLAGHLKLSKKMCPTTVEEKGNMAKVPYSSAVGSLMYAMVCTRPDIAHAVGVVSRFLENPGKEHWEAVKWILRYLRGTTGDCLCFGGSDPILKGYTDADMAGDIDNRKSSTGYLFTFSGGAISWQSKLQKCVALSTTEAEYIAATETGKEMIWLKRFLQELGLHQKEYVVYCDSQSAIDLSKNSMYHARTKHIDVRYHWIREMVDDESLKVLKISTNENPADMLTKVVPRNKFELCKELVGMHSN</sequence>
<reference key="1">
    <citation type="journal article" date="1989" name="Nature">
        <title>Tnt1, a mobile retroviral-like transposable element of tobacco isolated by plant cell genetics.</title>
        <authorList>
            <person name="Grandbastien M.-A."/>
            <person name="Spielmann A."/>
            <person name="Caboche M."/>
        </authorList>
    </citation>
    <scope>NUCLEOTIDE SEQUENCE [GENOMIC DNA]</scope>
</reference>